<proteinExistence type="inferred from homology"/>
<evidence type="ECO:0000250" key="1"/>
<evidence type="ECO:0000305" key="2"/>
<organism>
    <name type="scientific">Rhizobium meliloti (strain 1021)</name>
    <name type="common">Ensifer meliloti</name>
    <name type="synonym">Sinorhizobium meliloti</name>
    <dbReference type="NCBI Taxonomy" id="266834"/>
    <lineage>
        <taxon>Bacteria</taxon>
        <taxon>Pseudomonadati</taxon>
        <taxon>Pseudomonadota</taxon>
        <taxon>Alphaproteobacteria</taxon>
        <taxon>Hyphomicrobiales</taxon>
        <taxon>Rhizobiaceae</taxon>
        <taxon>Sinorhizobium/Ensifer group</taxon>
        <taxon>Sinorhizobium</taxon>
    </lineage>
</organism>
<protein>
    <recommendedName>
        <fullName>Peptide methionine sulfoxide reductase MsrA 2</fullName>
        <shortName>Protein-methionine-S-oxide reductase 2</shortName>
        <ecNumber>1.8.4.11</ecNumber>
    </recommendedName>
    <alternativeName>
        <fullName>Peptide-methionine (S)-S-oxide reductase 2</fullName>
        <shortName>Peptide Met(O) reductase 2</shortName>
    </alternativeName>
</protein>
<gene>
    <name type="primary">msrA2</name>
    <name type="ordered locus">R03068</name>
    <name type="ORF">SMc02467</name>
</gene>
<reference key="1">
    <citation type="journal article" date="2001" name="Proc. Natl. Acad. Sci. U.S.A.">
        <title>Analysis of the chromosome sequence of the legume symbiont Sinorhizobium meliloti strain 1021.</title>
        <authorList>
            <person name="Capela D."/>
            <person name="Barloy-Hubler F."/>
            <person name="Gouzy J."/>
            <person name="Bothe G."/>
            <person name="Ampe F."/>
            <person name="Batut J."/>
            <person name="Boistard P."/>
            <person name="Becker A."/>
            <person name="Boutry M."/>
            <person name="Cadieu E."/>
            <person name="Dreano S."/>
            <person name="Gloux S."/>
            <person name="Godrie T."/>
            <person name="Goffeau A."/>
            <person name="Kahn D."/>
            <person name="Kiss E."/>
            <person name="Lelaure V."/>
            <person name="Masuy D."/>
            <person name="Pohl T."/>
            <person name="Portetelle D."/>
            <person name="Puehler A."/>
            <person name="Purnelle B."/>
            <person name="Ramsperger U."/>
            <person name="Renard C."/>
            <person name="Thebault P."/>
            <person name="Vandenbol M."/>
            <person name="Weidner S."/>
            <person name="Galibert F."/>
        </authorList>
    </citation>
    <scope>NUCLEOTIDE SEQUENCE [LARGE SCALE GENOMIC DNA]</scope>
    <source>
        <strain>1021</strain>
    </source>
</reference>
<reference key="2">
    <citation type="journal article" date="2001" name="Science">
        <title>The composite genome of the legume symbiont Sinorhizobium meliloti.</title>
        <authorList>
            <person name="Galibert F."/>
            <person name="Finan T.M."/>
            <person name="Long S.R."/>
            <person name="Puehler A."/>
            <person name="Abola P."/>
            <person name="Ampe F."/>
            <person name="Barloy-Hubler F."/>
            <person name="Barnett M.J."/>
            <person name="Becker A."/>
            <person name="Boistard P."/>
            <person name="Bothe G."/>
            <person name="Boutry M."/>
            <person name="Bowser L."/>
            <person name="Buhrmester J."/>
            <person name="Cadieu E."/>
            <person name="Capela D."/>
            <person name="Chain P."/>
            <person name="Cowie A."/>
            <person name="Davis R.W."/>
            <person name="Dreano S."/>
            <person name="Federspiel N.A."/>
            <person name="Fisher R.F."/>
            <person name="Gloux S."/>
            <person name="Godrie T."/>
            <person name="Goffeau A."/>
            <person name="Golding B."/>
            <person name="Gouzy J."/>
            <person name="Gurjal M."/>
            <person name="Hernandez-Lucas I."/>
            <person name="Hong A."/>
            <person name="Huizar L."/>
            <person name="Hyman R.W."/>
            <person name="Jones T."/>
            <person name="Kahn D."/>
            <person name="Kahn M.L."/>
            <person name="Kalman S."/>
            <person name="Keating D.H."/>
            <person name="Kiss E."/>
            <person name="Komp C."/>
            <person name="Lelaure V."/>
            <person name="Masuy D."/>
            <person name="Palm C."/>
            <person name="Peck M.C."/>
            <person name="Pohl T.M."/>
            <person name="Portetelle D."/>
            <person name="Purnelle B."/>
            <person name="Ramsperger U."/>
            <person name="Surzycki R."/>
            <person name="Thebault P."/>
            <person name="Vandenbol M."/>
            <person name="Vorhoelter F.J."/>
            <person name="Weidner S."/>
            <person name="Wells D.H."/>
            <person name="Wong K."/>
            <person name="Yeh K.-C."/>
            <person name="Batut J."/>
        </authorList>
    </citation>
    <scope>NUCLEOTIDE SEQUENCE [LARGE SCALE GENOMIC DNA]</scope>
    <source>
        <strain>1021</strain>
    </source>
</reference>
<sequence length="198" mass="22136">MLRLLFGFLVTCFLLLPARAAEPQYAIFAGGCFWCVESDFDAVPGVLETISGYAGGKSANPTYEDYAKGGHREVVRVKFDPDRVSYAELVGVLFRTTDPTDGDGQFCDRGFAYTTAIHALNERQAMDAKAEKIKAEAELGRPIVTPVEGAAKFWPAEDYHQDFGKRNPIRYWYYRNGCGRNRTVEKLWGDRAYAGVSH</sequence>
<feature type="chain" id="PRO_0000138574" description="Peptide methionine sulfoxide reductase MsrA 2">
    <location>
        <begin position="1"/>
        <end position="198"/>
    </location>
</feature>
<feature type="active site" evidence="1">
    <location>
        <position position="32"/>
    </location>
</feature>
<dbReference type="EC" id="1.8.4.11"/>
<dbReference type="EMBL" id="AL591688">
    <property type="protein sequence ID" value="CAC47647.1"/>
    <property type="molecule type" value="Genomic_DNA"/>
</dbReference>
<dbReference type="RefSeq" id="NP_387174.1">
    <property type="nucleotide sequence ID" value="NC_003047.1"/>
</dbReference>
<dbReference type="RefSeq" id="WP_010970385.1">
    <property type="nucleotide sequence ID" value="NC_003047.1"/>
</dbReference>
<dbReference type="SMR" id="Q92LI5"/>
<dbReference type="EnsemblBacteria" id="CAC47647">
    <property type="protein sequence ID" value="CAC47647"/>
    <property type="gene ID" value="SMc02467"/>
</dbReference>
<dbReference type="KEGG" id="sme:SMc02467"/>
<dbReference type="PATRIC" id="fig|266834.11.peg.4602"/>
<dbReference type="eggNOG" id="COG0225">
    <property type="taxonomic scope" value="Bacteria"/>
</dbReference>
<dbReference type="HOGENOM" id="CLU_031040_10_1_5"/>
<dbReference type="OrthoDB" id="4174719at2"/>
<dbReference type="Proteomes" id="UP000001976">
    <property type="component" value="Chromosome"/>
</dbReference>
<dbReference type="GO" id="GO:0033744">
    <property type="term" value="F:L-methionine:thioredoxin-disulfide S-oxidoreductase activity"/>
    <property type="evidence" value="ECO:0007669"/>
    <property type="project" value="RHEA"/>
</dbReference>
<dbReference type="GO" id="GO:0008113">
    <property type="term" value="F:peptide-methionine (S)-S-oxide reductase activity"/>
    <property type="evidence" value="ECO:0007669"/>
    <property type="project" value="UniProtKB-UniRule"/>
</dbReference>
<dbReference type="GO" id="GO:0036211">
    <property type="term" value="P:protein modification process"/>
    <property type="evidence" value="ECO:0007669"/>
    <property type="project" value="UniProtKB-UniRule"/>
</dbReference>
<dbReference type="Gene3D" id="3.30.1060.10">
    <property type="entry name" value="Peptide methionine sulphoxide reductase MsrA"/>
    <property type="match status" value="1"/>
</dbReference>
<dbReference type="HAMAP" id="MF_01401">
    <property type="entry name" value="MsrA"/>
    <property type="match status" value="1"/>
</dbReference>
<dbReference type="InterPro" id="IPR002569">
    <property type="entry name" value="Met_Sox_Rdtase_MsrA_dom"/>
</dbReference>
<dbReference type="InterPro" id="IPR036509">
    <property type="entry name" value="Met_Sox_Rdtase_MsrA_sf"/>
</dbReference>
<dbReference type="NCBIfam" id="TIGR00401">
    <property type="entry name" value="msrA"/>
    <property type="match status" value="1"/>
</dbReference>
<dbReference type="PANTHER" id="PTHR43774">
    <property type="entry name" value="PEPTIDE METHIONINE SULFOXIDE REDUCTASE"/>
    <property type="match status" value="1"/>
</dbReference>
<dbReference type="PANTHER" id="PTHR43774:SF1">
    <property type="entry name" value="PEPTIDE METHIONINE SULFOXIDE REDUCTASE MSRA 2"/>
    <property type="match status" value="1"/>
</dbReference>
<dbReference type="Pfam" id="PF01625">
    <property type="entry name" value="PMSR"/>
    <property type="match status" value="1"/>
</dbReference>
<dbReference type="SUPFAM" id="SSF55068">
    <property type="entry name" value="Peptide methionine sulfoxide reductase"/>
    <property type="match status" value="1"/>
</dbReference>
<keyword id="KW-0560">Oxidoreductase</keyword>
<keyword id="KW-1185">Reference proteome</keyword>
<name>MSRA2_RHIME</name>
<comment type="function">
    <text evidence="1">Has an important function as a repair enzyme for proteins that have been inactivated by oxidation. Catalyzes the reversible oxidation-reduction of methionine sulfoxide in proteins to methionine (By similarity).</text>
</comment>
<comment type="catalytic activity">
    <reaction>
        <text>L-methionyl-[protein] + [thioredoxin]-disulfide + H2O = L-methionyl-(S)-S-oxide-[protein] + [thioredoxin]-dithiol</text>
        <dbReference type="Rhea" id="RHEA:14217"/>
        <dbReference type="Rhea" id="RHEA-COMP:10698"/>
        <dbReference type="Rhea" id="RHEA-COMP:10700"/>
        <dbReference type="Rhea" id="RHEA-COMP:12313"/>
        <dbReference type="Rhea" id="RHEA-COMP:12315"/>
        <dbReference type="ChEBI" id="CHEBI:15377"/>
        <dbReference type="ChEBI" id="CHEBI:16044"/>
        <dbReference type="ChEBI" id="CHEBI:29950"/>
        <dbReference type="ChEBI" id="CHEBI:44120"/>
        <dbReference type="ChEBI" id="CHEBI:50058"/>
        <dbReference type="EC" id="1.8.4.11"/>
    </reaction>
</comment>
<comment type="catalytic activity">
    <reaction>
        <text>[thioredoxin]-disulfide + L-methionine + H2O = L-methionine (S)-S-oxide + [thioredoxin]-dithiol</text>
        <dbReference type="Rhea" id="RHEA:19993"/>
        <dbReference type="Rhea" id="RHEA-COMP:10698"/>
        <dbReference type="Rhea" id="RHEA-COMP:10700"/>
        <dbReference type="ChEBI" id="CHEBI:15377"/>
        <dbReference type="ChEBI" id="CHEBI:29950"/>
        <dbReference type="ChEBI" id="CHEBI:50058"/>
        <dbReference type="ChEBI" id="CHEBI:57844"/>
        <dbReference type="ChEBI" id="CHEBI:58772"/>
        <dbReference type="EC" id="1.8.4.11"/>
    </reaction>
</comment>
<comment type="similarity">
    <text evidence="2">Belongs to the MsrA Met sulfoxide reductase family.</text>
</comment>
<accession>Q92LI5</accession>